<name>SYT_ALLAM</name>
<dbReference type="EC" id="6.1.1.3" evidence="1"/>
<dbReference type="EMBL" id="CP000633">
    <property type="protein sequence ID" value="ACM36582.1"/>
    <property type="molecule type" value="Genomic_DNA"/>
</dbReference>
<dbReference type="RefSeq" id="WP_015916003.1">
    <property type="nucleotide sequence ID" value="NC_011989.1"/>
</dbReference>
<dbReference type="SMR" id="B9JWF4"/>
<dbReference type="STRING" id="311402.Avi_2211"/>
<dbReference type="KEGG" id="avi:Avi_2211"/>
<dbReference type="eggNOG" id="COG0441">
    <property type="taxonomic scope" value="Bacteria"/>
</dbReference>
<dbReference type="HOGENOM" id="CLU_008554_0_1_5"/>
<dbReference type="Proteomes" id="UP000001596">
    <property type="component" value="Chromosome 1"/>
</dbReference>
<dbReference type="GO" id="GO:0005829">
    <property type="term" value="C:cytosol"/>
    <property type="evidence" value="ECO:0007669"/>
    <property type="project" value="TreeGrafter"/>
</dbReference>
<dbReference type="GO" id="GO:0005524">
    <property type="term" value="F:ATP binding"/>
    <property type="evidence" value="ECO:0007669"/>
    <property type="project" value="UniProtKB-UniRule"/>
</dbReference>
<dbReference type="GO" id="GO:0046872">
    <property type="term" value="F:metal ion binding"/>
    <property type="evidence" value="ECO:0007669"/>
    <property type="project" value="UniProtKB-KW"/>
</dbReference>
<dbReference type="GO" id="GO:0004829">
    <property type="term" value="F:threonine-tRNA ligase activity"/>
    <property type="evidence" value="ECO:0007669"/>
    <property type="project" value="UniProtKB-UniRule"/>
</dbReference>
<dbReference type="GO" id="GO:0000049">
    <property type="term" value="F:tRNA binding"/>
    <property type="evidence" value="ECO:0007669"/>
    <property type="project" value="UniProtKB-KW"/>
</dbReference>
<dbReference type="GO" id="GO:0006435">
    <property type="term" value="P:threonyl-tRNA aminoacylation"/>
    <property type="evidence" value="ECO:0007669"/>
    <property type="project" value="UniProtKB-UniRule"/>
</dbReference>
<dbReference type="CDD" id="cd01667">
    <property type="entry name" value="TGS_ThrRS"/>
    <property type="match status" value="1"/>
</dbReference>
<dbReference type="CDD" id="cd00860">
    <property type="entry name" value="ThrRS_anticodon"/>
    <property type="match status" value="1"/>
</dbReference>
<dbReference type="CDD" id="cd00771">
    <property type="entry name" value="ThrRS_core"/>
    <property type="match status" value="1"/>
</dbReference>
<dbReference type="FunFam" id="3.30.54.20:FF:000002">
    <property type="entry name" value="Threonine--tRNA ligase"/>
    <property type="match status" value="1"/>
</dbReference>
<dbReference type="FunFam" id="3.30.930.10:FF:000002">
    <property type="entry name" value="Threonine--tRNA ligase"/>
    <property type="match status" value="1"/>
</dbReference>
<dbReference type="FunFam" id="3.40.50.800:FF:000001">
    <property type="entry name" value="Threonine--tRNA ligase"/>
    <property type="match status" value="1"/>
</dbReference>
<dbReference type="FunFam" id="3.30.980.10:FF:000005">
    <property type="entry name" value="Threonyl-tRNA synthetase, mitochondrial"/>
    <property type="match status" value="1"/>
</dbReference>
<dbReference type="Gene3D" id="3.10.20.30">
    <property type="match status" value="1"/>
</dbReference>
<dbReference type="Gene3D" id="3.30.54.20">
    <property type="match status" value="1"/>
</dbReference>
<dbReference type="Gene3D" id="3.40.50.800">
    <property type="entry name" value="Anticodon-binding domain"/>
    <property type="match status" value="1"/>
</dbReference>
<dbReference type="Gene3D" id="3.30.930.10">
    <property type="entry name" value="Bira Bifunctional Protein, Domain 2"/>
    <property type="match status" value="1"/>
</dbReference>
<dbReference type="Gene3D" id="3.30.980.10">
    <property type="entry name" value="Threonyl-trna Synthetase, Chain A, domain 2"/>
    <property type="match status" value="1"/>
</dbReference>
<dbReference type="HAMAP" id="MF_00184">
    <property type="entry name" value="Thr_tRNA_synth"/>
    <property type="match status" value="1"/>
</dbReference>
<dbReference type="InterPro" id="IPR002314">
    <property type="entry name" value="aa-tRNA-synt_IIb"/>
</dbReference>
<dbReference type="InterPro" id="IPR006195">
    <property type="entry name" value="aa-tRNA-synth_II"/>
</dbReference>
<dbReference type="InterPro" id="IPR045864">
    <property type="entry name" value="aa-tRNA-synth_II/BPL/LPL"/>
</dbReference>
<dbReference type="InterPro" id="IPR004154">
    <property type="entry name" value="Anticodon-bd"/>
</dbReference>
<dbReference type="InterPro" id="IPR036621">
    <property type="entry name" value="Anticodon-bd_dom_sf"/>
</dbReference>
<dbReference type="InterPro" id="IPR012675">
    <property type="entry name" value="Beta-grasp_dom_sf"/>
</dbReference>
<dbReference type="InterPro" id="IPR004095">
    <property type="entry name" value="TGS"/>
</dbReference>
<dbReference type="InterPro" id="IPR012676">
    <property type="entry name" value="TGS-like"/>
</dbReference>
<dbReference type="InterPro" id="IPR002320">
    <property type="entry name" value="Thr-tRNA-ligase_IIa"/>
</dbReference>
<dbReference type="InterPro" id="IPR018163">
    <property type="entry name" value="Thr/Ala-tRNA-synth_IIc_edit"/>
</dbReference>
<dbReference type="InterPro" id="IPR047246">
    <property type="entry name" value="ThrRS_anticodon"/>
</dbReference>
<dbReference type="InterPro" id="IPR033728">
    <property type="entry name" value="ThrRS_core"/>
</dbReference>
<dbReference type="InterPro" id="IPR012947">
    <property type="entry name" value="tRNA_SAD"/>
</dbReference>
<dbReference type="NCBIfam" id="TIGR00418">
    <property type="entry name" value="thrS"/>
    <property type="match status" value="1"/>
</dbReference>
<dbReference type="PANTHER" id="PTHR11451:SF44">
    <property type="entry name" value="THREONINE--TRNA LIGASE, CHLOROPLASTIC_MITOCHONDRIAL 2"/>
    <property type="match status" value="1"/>
</dbReference>
<dbReference type="PANTHER" id="PTHR11451">
    <property type="entry name" value="THREONINE-TRNA LIGASE"/>
    <property type="match status" value="1"/>
</dbReference>
<dbReference type="Pfam" id="PF03129">
    <property type="entry name" value="HGTP_anticodon"/>
    <property type="match status" value="1"/>
</dbReference>
<dbReference type="Pfam" id="PF02824">
    <property type="entry name" value="TGS"/>
    <property type="match status" value="1"/>
</dbReference>
<dbReference type="Pfam" id="PF00587">
    <property type="entry name" value="tRNA-synt_2b"/>
    <property type="match status" value="1"/>
</dbReference>
<dbReference type="Pfam" id="PF07973">
    <property type="entry name" value="tRNA_SAD"/>
    <property type="match status" value="1"/>
</dbReference>
<dbReference type="PRINTS" id="PR01047">
    <property type="entry name" value="TRNASYNTHTHR"/>
</dbReference>
<dbReference type="SMART" id="SM00863">
    <property type="entry name" value="tRNA_SAD"/>
    <property type="match status" value="1"/>
</dbReference>
<dbReference type="SUPFAM" id="SSF52954">
    <property type="entry name" value="Class II aaRS ABD-related"/>
    <property type="match status" value="1"/>
</dbReference>
<dbReference type="SUPFAM" id="SSF55681">
    <property type="entry name" value="Class II aaRS and biotin synthetases"/>
    <property type="match status" value="1"/>
</dbReference>
<dbReference type="SUPFAM" id="SSF81271">
    <property type="entry name" value="TGS-like"/>
    <property type="match status" value="1"/>
</dbReference>
<dbReference type="SUPFAM" id="SSF55186">
    <property type="entry name" value="ThrRS/AlaRS common domain"/>
    <property type="match status" value="1"/>
</dbReference>
<dbReference type="PROSITE" id="PS50862">
    <property type="entry name" value="AA_TRNA_LIGASE_II"/>
    <property type="match status" value="1"/>
</dbReference>
<dbReference type="PROSITE" id="PS51880">
    <property type="entry name" value="TGS"/>
    <property type="match status" value="1"/>
</dbReference>
<accession>B9JWF4</accession>
<organism>
    <name type="scientific">Allorhizobium ampelinum (strain ATCC BAA-846 / DSM 112012 / S4)</name>
    <name type="common">Agrobacterium vitis (strain S4)</name>
    <dbReference type="NCBI Taxonomy" id="311402"/>
    <lineage>
        <taxon>Bacteria</taxon>
        <taxon>Pseudomonadati</taxon>
        <taxon>Pseudomonadota</taxon>
        <taxon>Alphaproteobacteria</taxon>
        <taxon>Hyphomicrobiales</taxon>
        <taxon>Rhizobiaceae</taxon>
        <taxon>Rhizobium/Agrobacterium group</taxon>
        <taxon>Allorhizobium</taxon>
        <taxon>Allorhizobium ampelinum</taxon>
    </lineage>
</organism>
<evidence type="ECO:0000255" key="1">
    <source>
        <dbReference type="HAMAP-Rule" id="MF_00184"/>
    </source>
</evidence>
<evidence type="ECO:0000255" key="2">
    <source>
        <dbReference type="PROSITE-ProRule" id="PRU01228"/>
    </source>
</evidence>
<sequence>MSDTVSLTFPDGSVRSFAAGATGRDVAESISKSLAKKAVAIALDGVVRDLADPVVDGKIEIVTRADPRALELIRHDTAHVLAEAVQEMWPGTQVTIGPVIENGFYYDFAKNEPFTPEDLPKIEKKMKEIIQRNQPFRKEVWSREKAREVFAAKGESYKVELIDAIPEDQDIKIYYQGDWFDPCRGPHMASTGQIGTAFKLMKVAGAYWRGDSNNPMLTRIYGTAFAEQEQLDNYLHILAEAEKRDHRKLGREMDLFHFQEEGPGVVFWHGKGWKMFQSLTAYMRRRLANTYQEVNAPQVLDKSLWETSGHWGWYQENMFAVKSAHAFTNPNDPEADQRVFALKPMNCPGHVQIFKHGLKSYRELPVRLAEFGLVHRYEASGALHGLMRVRGFTQDDAHVFCTEEQMAAECLRINDLILSVYEDFGFKEVVVKLSTRPEKRVGSDELWDRAESVMTEVLKAIEEQSGGRIKTGILPGEGAFYGPKFEYTLKDAIGREWQCGTTQVDFNLPERFGAFYIDQHSEKTQPVMIHRAICGSMERFLGILIENFAGHMPLWFAPLQVVVATITSEADDYGRDVAEQLRDAGLEVETDFRNEKINYKVREHSVGKVPVIMVCGKREAEERTVNIRRLGSQDQVSMTLDEAIASLVDEATPPDVKRKRAARKPA</sequence>
<proteinExistence type="inferred from homology"/>
<keyword id="KW-0030">Aminoacyl-tRNA synthetase</keyword>
<keyword id="KW-0067">ATP-binding</keyword>
<keyword id="KW-0963">Cytoplasm</keyword>
<keyword id="KW-0436">Ligase</keyword>
<keyword id="KW-0479">Metal-binding</keyword>
<keyword id="KW-0547">Nucleotide-binding</keyword>
<keyword id="KW-0648">Protein biosynthesis</keyword>
<keyword id="KW-1185">Reference proteome</keyword>
<keyword id="KW-0694">RNA-binding</keyword>
<keyword id="KW-0820">tRNA-binding</keyword>
<keyword id="KW-0862">Zinc</keyword>
<reference key="1">
    <citation type="journal article" date="2009" name="J. Bacteriol.">
        <title>Genome sequences of three Agrobacterium biovars help elucidate the evolution of multichromosome genomes in bacteria.</title>
        <authorList>
            <person name="Slater S.C."/>
            <person name="Goldman B.S."/>
            <person name="Goodner B."/>
            <person name="Setubal J.C."/>
            <person name="Farrand S.K."/>
            <person name="Nester E.W."/>
            <person name="Burr T.J."/>
            <person name="Banta L."/>
            <person name="Dickerman A.W."/>
            <person name="Paulsen I."/>
            <person name="Otten L."/>
            <person name="Suen G."/>
            <person name="Welch R."/>
            <person name="Almeida N.F."/>
            <person name="Arnold F."/>
            <person name="Burton O.T."/>
            <person name="Du Z."/>
            <person name="Ewing A."/>
            <person name="Godsy E."/>
            <person name="Heisel S."/>
            <person name="Houmiel K.L."/>
            <person name="Jhaveri J."/>
            <person name="Lu J."/>
            <person name="Miller N.M."/>
            <person name="Norton S."/>
            <person name="Chen Q."/>
            <person name="Phoolcharoen W."/>
            <person name="Ohlin V."/>
            <person name="Ondrusek D."/>
            <person name="Pride N."/>
            <person name="Stricklin S.L."/>
            <person name="Sun J."/>
            <person name="Wheeler C."/>
            <person name="Wilson L."/>
            <person name="Zhu H."/>
            <person name="Wood D.W."/>
        </authorList>
    </citation>
    <scope>NUCLEOTIDE SEQUENCE [LARGE SCALE GENOMIC DNA]</scope>
    <source>
        <strain>ATCC BAA-846 / DSM 112012 / S4</strain>
    </source>
</reference>
<protein>
    <recommendedName>
        <fullName evidence="1">Threonine--tRNA ligase</fullName>
        <ecNumber evidence="1">6.1.1.3</ecNumber>
    </recommendedName>
    <alternativeName>
        <fullName evidence="1">Threonyl-tRNA synthetase</fullName>
        <shortName evidence="1">ThrRS</shortName>
    </alternativeName>
</protein>
<gene>
    <name evidence="1" type="primary">thrS</name>
    <name type="ordered locus">Avi_2211</name>
</gene>
<comment type="function">
    <text evidence="1">Catalyzes the attachment of threonine to tRNA(Thr) in a two-step reaction: L-threonine is first activated by ATP to form Thr-AMP and then transferred to the acceptor end of tRNA(Thr). Also edits incorrectly charged L-seryl-tRNA(Thr).</text>
</comment>
<comment type="catalytic activity">
    <reaction evidence="1">
        <text>tRNA(Thr) + L-threonine + ATP = L-threonyl-tRNA(Thr) + AMP + diphosphate + H(+)</text>
        <dbReference type="Rhea" id="RHEA:24624"/>
        <dbReference type="Rhea" id="RHEA-COMP:9670"/>
        <dbReference type="Rhea" id="RHEA-COMP:9704"/>
        <dbReference type="ChEBI" id="CHEBI:15378"/>
        <dbReference type="ChEBI" id="CHEBI:30616"/>
        <dbReference type="ChEBI" id="CHEBI:33019"/>
        <dbReference type="ChEBI" id="CHEBI:57926"/>
        <dbReference type="ChEBI" id="CHEBI:78442"/>
        <dbReference type="ChEBI" id="CHEBI:78534"/>
        <dbReference type="ChEBI" id="CHEBI:456215"/>
        <dbReference type="EC" id="6.1.1.3"/>
    </reaction>
</comment>
<comment type="cofactor">
    <cofactor evidence="1">
        <name>Zn(2+)</name>
        <dbReference type="ChEBI" id="CHEBI:29105"/>
    </cofactor>
    <text evidence="1">Binds 1 zinc ion per subunit.</text>
</comment>
<comment type="subunit">
    <text evidence="1">Homodimer.</text>
</comment>
<comment type="subcellular location">
    <subcellularLocation>
        <location evidence="1">Cytoplasm</location>
    </subcellularLocation>
</comment>
<comment type="similarity">
    <text evidence="1">Belongs to the class-II aminoacyl-tRNA synthetase family.</text>
</comment>
<feature type="chain" id="PRO_1000199523" description="Threonine--tRNA ligase">
    <location>
        <begin position="1"/>
        <end position="666"/>
    </location>
</feature>
<feature type="domain" description="TGS" evidence="2">
    <location>
        <begin position="1"/>
        <end position="64"/>
    </location>
</feature>
<feature type="region of interest" description="Catalytic" evidence="1">
    <location>
        <begin position="245"/>
        <end position="553"/>
    </location>
</feature>
<feature type="binding site" evidence="1">
    <location>
        <position position="347"/>
    </location>
    <ligand>
        <name>Zn(2+)</name>
        <dbReference type="ChEBI" id="CHEBI:29105"/>
    </ligand>
</feature>
<feature type="binding site" evidence="1">
    <location>
        <position position="398"/>
    </location>
    <ligand>
        <name>Zn(2+)</name>
        <dbReference type="ChEBI" id="CHEBI:29105"/>
    </ligand>
</feature>
<feature type="binding site" evidence="1">
    <location>
        <position position="530"/>
    </location>
    <ligand>
        <name>Zn(2+)</name>
        <dbReference type="ChEBI" id="CHEBI:29105"/>
    </ligand>
</feature>